<name>DHE2_MYCS2</name>
<reference key="1">
    <citation type="submission" date="2006-10" db="EMBL/GenBank/DDBJ databases">
        <authorList>
            <person name="Fleischmann R.D."/>
            <person name="Dodson R.J."/>
            <person name="Haft D.H."/>
            <person name="Merkel J.S."/>
            <person name="Nelson W.C."/>
            <person name="Fraser C.M."/>
        </authorList>
    </citation>
    <scope>NUCLEOTIDE SEQUENCE [LARGE SCALE GENOMIC DNA]</scope>
    <source>
        <strain>ATCC 700084 / mc(2)155</strain>
    </source>
</reference>
<reference key="2">
    <citation type="journal article" date="2007" name="Genome Biol.">
        <title>Interrupted coding sequences in Mycobacterium smegmatis: authentic mutations or sequencing errors?</title>
        <authorList>
            <person name="Deshayes C."/>
            <person name="Perrodou E."/>
            <person name="Gallien S."/>
            <person name="Euphrasie D."/>
            <person name="Schaeffer C."/>
            <person name="Van-Dorsselaer A."/>
            <person name="Poch O."/>
            <person name="Lecompte O."/>
            <person name="Reyrat J.-M."/>
        </authorList>
    </citation>
    <scope>NUCLEOTIDE SEQUENCE [LARGE SCALE GENOMIC DNA]</scope>
    <source>
        <strain>ATCC 700084 / mc(2)155</strain>
    </source>
</reference>
<reference key="3">
    <citation type="journal article" date="2009" name="Genome Res.">
        <title>Ortho-proteogenomics: multiple proteomes investigation through orthology and a new MS-based protocol.</title>
        <authorList>
            <person name="Gallien S."/>
            <person name="Perrodou E."/>
            <person name="Carapito C."/>
            <person name="Deshayes C."/>
            <person name="Reyrat J.-M."/>
            <person name="Van Dorsselaer A."/>
            <person name="Poch O."/>
            <person name="Schaeffer C."/>
            <person name="Lecompte O."/>
        </authorList>
    </citation>
    <scope>NUCLEOTIDE SEQUENCE [LARGE SCALE GENOMIC DNA]</scope>
    <source>
        <strain>ATCC 700084 / mc(2)155</strain>
    </source>
</reference>
<reference key="4">
    <citation type="journal article" date="2008" name="Mol. Microbiol.">
        <title>Regulation of glutamate metabolism by protein kinases in mycobacteria.</title>
        <authorList>
            <person name="O'Hare H.M."/>
            <person name="Duran R."/>
            <person name="Cervenansky C."/>
            <person name="Bellinzoni M."/>
            <person name="Wehenkel A.M."/>
            <person name="Pritsch O."/>
            <person name="Obal G."/>
            <person name="Baumgartner J."/>
            <person name="Vialaret J."/>
            <person name="Johnsson K."/>
            <person name="Alzari P.M."/>
        </authorList>
    </citation>
    <scope>FUNCTION</scope>
    <scope>CATALYTIC ACTIVITY</scope>
    <scope>ACTIVITY REGULATION</scope>
    <scope>BIOPHYSICOCHEMICAL PROPERTIES</scope>
    <scope>INTERACTION WITH GARA</scope>
    <source>
        <strain>ATCC 700084 / mc(2)155</strain>
    </source>
</reference>
<proteinExistence type="evidence at protein level"/>
<feature type="chain" id="PRO_0000419535" description="NAD-specific glutamate dehydrogenase">
    <location>
        <begin position="1"/>
        <end position="1594"/>
    </location>
</feature>
<feature type="active site" evidence="1">
    <location>
        <position position="816"/>
    </location>
</feature>
<gene>
    <name type="primary">gdh</name>
    <name type="ordered locus">MSMEG_4699</name>
    <name type="ordered locus">MSMEI_4582</name>
</gene>
<protein>
    <recommendedName>
        <fullName>NAD-specific glutamate dehydrogenase</fullName>
        <shortName>NAD-GDH</shortName>
        <ecNumber>1.4.1.2</ecNumber>
    </recommendedName>
    <alternativeName>
        <fullName>NAD(+)-dependent glutamate dehydrogenase</fullName>
    </alternativeName>
</protein>
<sequence length="1594" mass="174095">MIRRLSVAFLSTYRGPQADAPGVTSTGPLAVAAHDDLVSDDLVAAHYRLASMRAPGETKAAVYPGDAGSGAALQIVTDQAPMLVDSVTVLLHRHGIAYTAIMNPVFRVRRGLDGELLDVRPAAEAAPGDGADECWILVPITAAADGEALTEATRLVPGILAEARQIGLDSGAMIAALHGLANDLATDLEGHFPNAERKEVAALLRWLADGHFVLLGYQQCVVGDGNAEVDPASRLGVLRLRNDVLPPLTDSDDLLVLAQATMPSYLRYGAYPYIVVVRESPGASRVIEHRFVGLFTVAAMNANALEIPLISRRVEEALAMAHRDPSHPGQLLRDIIQTIPRPELFALSSKQLLEMALAVVDLGSRRRTLLFLRADHLAHFVSCLVYLPRDRYTTAVRLEMQDILVRELGGAGIDYSARVSESPWAVVHFTVRLPEGTAADSVDTSLENESRIQDLLTEATRNWGDRMISAAAAASISPAALEHYAHAFPEDYKQAFAPQDAIADISLIEALQDDSVKLVLADTAEDRVWKLTWYLGGHSASLSELLPMLQSMGVVVLEERPFTLRRTDGLPVWIYQFKISPHPSIPHAPDAEAQRDTAQRFADAVTAIWHGRVEIDRFNELVMRAGLTWQQVVVLRAYAKYLRQAGFPYSQSHIESVLNENPHTTRSLIDLFEALFDPSQETDGRRDAQGAAAAVAADIDALVSLDTDRVLRAFANLIEATLRTNYFVARPDSARARNVLAFKLNPLVIKELPLPRPKFEIFVYSPRVEGVHLRFGFVARGGLRWSDRREDFRTEILGLVKAQAVKNAVIVPVGAKGGFVVKRPPTLTGDAAADREATRAEGVECYRLFISGLLDVTDNVDKATGAVVTPPEVVRRDGEDAYLVVAADKGTATFSDIANEVAKSYGFWLGDAFASGGSIGYDHKAMGITAKGAWESVKRHFREMGVDTQTQDFTVVGIGDMSGDVFGNGMLLSKHIRLVAAFDHRDIFLDPNPDAGRSWDERKRLFDLPRSSWADYDKSLISEGGGVYSRQQKSIPISPQVRTALGLDADVEELTPPALIKAILKAPVDLLWNGGIGTYIKAETEADADVGDRANDQIRVCGNQVRAKVIGEGGNLGVTALGRIEFDLAGGRINTDALDNSAGVDCSDHEVNIKILIDSAVTAGKVTPEERTELLLSMTDEVGELVLADNRDQNDLMGTSRANAASLLSVHARMIKDLVDNRGLNRELEALPSEKEIRRRADAGIGLTSPELATLMAHVKLALKDDVLASDLPDQEVFASRLPYYFPTRLREELHGEIRSHQLRREIITTMLVNDLVDTAGISYAYRITEDVGVGPVDAVRSYVAINAIFGIGDVWRRIRAAGDAGVPTSVTDRMTLDLRRLVDRAGRWLLNYRPQPLAVGAEINRFGAKVAALTPRMSEWLRGDDKAIVSKEAGDFASHGVPEDLAYHIATGLYQYSLLDVIDIADIVDREPDEVADTYFALMDHLGADALLTAVSRLSRDDRWHSLARLAIRDDIYGSLRALCFDVLAVGEPDENGEEKIAEWETTNSSRVTRARRTLTEIYKDGEQDLATLSVAARQIRSMTRTSGTGTTG</sequence>
<keyword id="KW-0002">3D-structure</keyword>
<keyword id="KW-0520">NAD</keyword>
<keyword id="KW-0560">Oxidoreductase</keyword>
<keyword id="KW-1185">Reference proteome</keyword>
<organism>
    <name type="scientific">Mycolicibacterium smegmatis (strain ATCC 700084 / mc(2)155)</name>
    <name type="common">Mycobacterium smegmatis</name>
    <dbReference type="NCBI Taxonomy" id="246196"/>
    <lineage>
        <taxon>Bacteria</taxon>
        <taxon>Bacillati</taxon>
        <taxon>Actinomycetota</taxon>
        <taxon>Actinomycetes</taxon>
        <taxon>Mycobacteriales</taxon>
        <taxon>Mycobacteriaceae</taxon>
        <taxon>Mycolicibacterium</taxon>
    </lineage>
</organism>
<accession>A0R1C2</accession>
<accession>I7GDY4</accession>
<comment type="function">
    <text evidence="2">Catalyzes the reversible conversion of L-glutamate to 2-oxoglutarate. Highly specific for NAD.</text>
</comment>
<comment type="catalytic activity">
    <reaction evidence="2">
        <text>L-glutamate + NAD(+) + H2O = 2-oxoglutarate + NH4(+) + NADH + H(+)</text>
        <dbReference type="Rhea" id="RHEA:15133"/>
        <dbReference type="ChEBI" id="CHEBI:15377"/>
        <dbReference type="ChEBI" id="CHEBI:15378"/>
        <dbReference type="ChEBI" id="CHEBI:16810"/>
        <dbReference type="ChEBI" id="CHEBI:28938"/>
        <dbReference type="ChEBI" id="CHEBI:29985"/>
        <dbReference type="ChEBI" id="CHEBI:57540"/>
        <dbReference type="ChEBI" id="CHEBI:57945"/>
        <dbReference type="EC" id="1.4.1.2"/>
    </reaction>
</comment>
<comment type="activity regulation">
    <text evidence="2">Activity is inhibited by unphosphorylated GarA. Stimulated by manganese and magnesium.</text>
</comment>
<comment type="biophysicochemical properties">
    <kinetics>
        <KM evidence="2">45 mM for ammonium</KM>
    </kinetics>
    <phDependence>
        <text evidence="2">Optimum pH is 8.5.</text>
    </phDependence>
</comment>
<comment type="subunit">
    <text evidence="2">Interacts with (unphosphorylated) GarA.</text>
</comment>
<comment type="similarity">
    <text evidence="3">Belongs to the Glu/Leu/Phe/Val dehydrogenases family.</text>
</comment>
<comment type="sequence caution" evidence="3">
    <conflict type="erroneous initiation">
        <sequence resource="EMBL-CDS" id="AFP41034"/>
    </conflict>
    <text>Extended N-terminus.</text>
</comment>
<dbReference type="EC" id="1.4.1.2"/>
<dbReference type="EMBL" id="CP000480">
    <property type="protein sequence ID" value="ABK72988.1"/>
    <property type="molecule type" value="Genomic_DNA"/>
</dbReference>
<dbReference type="EMBL" id="CP001663">
    <property type="protein sequence ID" value="AFP41034.1"/>
    <property type="status" value="ALT_INIT"/>
    <property type="molecule type" value="Genomic_DNA"/>
</dbReference>
<dbReference type="RefSeq" id="WP_011730019.1">
    <property type="nucleotide sequence ID" value="NZ_SIJM01000004.1"/>
</dbReference>
<dbReference type="RefSeq" id="YP_888960.1">
    <property type="nucleotide sequence ID" value="NC_008596.1"/>
</dbReference>
<dbReference type="PDB" id="7A1D">
    <property type="method" value="EM"/>
    <property type="resolution" value="4.19 A"/>
    <property type="chains" value="A/B/C/D=1-1594"/>
</dbReference>
<dbReference type="PDB" id="7JSR">
    <property type="method" value="X-ray"/>
    <property type="resolution" value="6.27 A"/>
    <property type="chains" value="A/B=1-1594"/>
</dbReference>
<dbReference type="PDBsum" id="7A1D"/>
<dbReference type="PDBsum" id="7JSR"/>
<dbReference type="EMDB" id="EMD-11606"/>
<dbReference type="SMR" id="A0R1C2"/>
<dbReference type="IntAct" id="A0R1C2">
    <property type="interactions" value="2"/>
</dbReference>
<dbReference type="STRING" id="246196.MSMEG_4699"/>
<dbReference type="PaxDb" id="246196-MSMEI_4582"/>
<dbReference type="KEGG" id="msb:LJ00_23235"/>
<dbReference type="KEGG" id="msg:MSMEI_4582"/>
<dbReference type="KEGG" id="msm:MSMEG_4699"/>
<dbReference type="PATRIC" id="fig|246196.19.peg.4589"/>
<dbReference type="eggNOG" id="COG2902">
    <property type="taxonomic scope" value="Bacteria"/>
</dbReference>
<dbReference type="OrthoDB" id="9758052at2"/>
<dbReference type="BRENDA" id="1.4.1.2">
    <property type="organism ID" value="3512"/>
</dbReference>
<dbReference type="SABIO-RK" id="A0R1C2"/>
<dbReference type="Proteomes" id="UP000000757">
    <property type="component" value="Chromosome"/>
</dbReference>
<dbReference type="Proteomes" id="UP000006158">
    <property type="component" value="Chromosome"/>
</dbReference>
<dbReference type="GO" id="GO:0004352">
    <property type="term" value="F:glutamate dehydrogenase (NAD+) activity"/>
    <property type="evidence" value="ECO:0007669"/>
    <property type="project" value="UniProtKB-EC"/>
</dbReference>
<dbReference type="GO" id="GO:0004069">
    <property type="term" value="F:L-aspartate:2-oxoglutarate aminotransferase activity"/>
    <property type="evidence" value="ECO:0007669"/>
    <property type="project" value="InterPro"/>
</dbReference>
<dbReference type="GO" id="GO:0006538">
    <property type="term" value="P:glutamate catabolic process"/>
    <property type="evidence" value="ECO:0007669"/>
    <property type="project" value="InterPro"/>
</dbReference>
<dbReference type="Gene3D" id="3.40.50.720">
    <property type="entry name" value="NAD(P)-binding Rossmann-like Domain"/>
    <property type="match status" value="1"/>
</dbReference>
<dbReference type="InterPro" id="IPR046346">
    <property type="entry name" value="Aminoacid_DH-like_N_sf"/>
</dbReference>
<dbReference type="InterPro" id="IPR048381">
    <property type="entry name" value="GDH_C"/>
</dbReference>
<dbReference type="InterPro" id="IPR036291">
    <property type="entry name" value="NAD(P)-bd_dom_sf"/>
</dbReference>
<dbReference type="InterPro" id="IPR028971">
    <property type="entry name" value="NAD-GDH_cat"/>
</dbReference>
<dbReference type="InterPro" id="IPR049062">
    <property type="entry name" value="NAD_Glu_DH_ACT2"/>
</dbReference>
<dbReference type="InterPro" id="IPR049064">
    <property type="entry name" value="NAD_Glu_DH_ACT3"/>
</dbReference>
<dbReference type="InterPro" id="IPR007780">
    <property type="entry name" value="NAD_Glu_DH_bac"/>
</dbReference>
<dbReference type="InterPro" id="IPR049059">
    <property type="entry name" value="NAD_Glu_DH_HM1"/>
</dbReference>
<dbReference type="InterPro" id="IPR049058">
    <property type="entry name" value="NAD_Glu_DH_HM2"/>
</dbReference>
<dbReference type="InterPro" id="IPR049056">
    <property type="entry name" value="NAD_Glu_DH_HM3"/>
</dbReference>
<dbReference type="InterPro" id="IPR024727">
    <property type="entry name" value="NAD_Glu_DH_N_ACT1"/>
</dbReference>
<dbReference type="PANTHER" id="PTHR43403">
    <property type="entry name" value="NAD-SPECIFIC GLUTAMATE DEHYDROGENASE"/>
    <property type="match status" value="1"/>
</dbReference>
<dbReference type="PANTHER" id="PTHR43403:SF1">
    <property type="entry name" value="NAD-SPECIFIC GLUTAMATE DEHYDROGENASE"/>
    <property type="match status" value="1"/>
</dbReference>
<dbReference type="Pfam" id="PF05088">
    <property type="entry name" value="Bac_GDH_CD"/>
    <property type="match status" value="1"/>
</dbReference>
<dbReference type="Pfam" id="PF21075">
    <property type="entry name" value="GDH_ACT1"/>
    <property type="match status" value="1"/>
</dbReference>
<dbReference type="Pfam" id="PF21076">
    <property type="entry name" value="GDH_ACT2"/>
    <property type="match status" value="1"/>
</dbReference>
<dbReference type="Pfam" id="PF21077">
    <property type="entry name" value="GDH_ACT3"/>
    <property type="match status" value="1"/>
</dbReference>
<dbReference type="Pfam" id="PF21074">
    <property type="entry name" value="GDH_C"/>
    <property type="match status" value="1"/>
</dbReference>
<dbReference type="Pfam" id="PF21073">
    <property type="entry name" value="GDH_HM1"/>
    <property type="match status" value="1"/>
</dbReference>
<dbReference type="Pfam" id="PF21079">
    <property type="entry name" value="GDH_HM2"/>
    <property type="match status" value="1"/>
</dbReference>
<dbReference type="Pfam" id="PF21078">
    <property type="entry name" value="GDH_HM3"/>
    <property type="match status" value="1"/>
</dbReference>
<dbReference type="PIRSF" id="PIRSF036761">
    <property type="entry name" value="GDH_Mll4104"/>
    <property type="match status" value="1"/>
</dbReference>
<dbReference type="SUPFAM" id="SSF53223">
    <property type="entry name" value="Aminoacid dehydrogenase-like, N-terminal domain"/>
    <property type="match status" value="1"/>
</dbReference>
<dbReference type="SUPFAM" id="SSF51735">
    <property type="entry name" value="NAD(P)-binding Rossmann-fold domains"/>
    <property type="match status" value="1"/>
</dbReference>
<evidence type="ECO:0000250" key="1"/>
<evidence type="ECO:0000269" key="2">
    <source>
    </source>
</evidence>
<evidence type="ECO:0000305" key="3"/>